<name>DER_STAA3</name>
<reference key="1">
    <citation type="journal article" date="2006" name="Lancet">
        <title>Complete genome sequence of USA300, an epidemic clone of community-acquired meticillin-resistant Staphylococcus aureus.</title>
        <authorList>
            <person name="Diep B.A."/>
            <person name="Gill S.R."/>
            <person name="Chang R.F."/>
            <person name="Phan T.H."/>
            <person name="Chen J.H."/>
            <person name="Davidson M.G."/>
            <person name="Lin F."/>
            <person name="Lin J."/>
            <person name="Carleton H.A."/>
            <person name="Mongodin E.F."/>
            <person name="Sensabaugh G.F."/>
            <person name="Perdreau-Remington F."/>
        </authorList>
    </citation>
    <scope>NUCLEOTIDE SEQUENCE [LARGE SCALE GENOMIC DNA]</scope>
    <source>
        <strain>USA300</strain>
    </source>
</reference>
<accession>Q2FGW7</accession>
<organism>
    <name type="scientific">Staphylococcus aureus (strain USA300)</name>
    <dbReference type="NCBI Taxonomy" id="367830"/>
    <lineage>
        <taxon>Bacteria</taxon>
        <taxon>Bacillati</taxon>
        <taxon>Bacillota</taxon>
        <taxon>Bacilli</taxon>
        <taxon>Bacillales</taxon>
        <taxon>Staphylococcaceae</taxon>
        <taxon>Staphylococcus</taxon>
    </lineage>
</organism>
<feature type="chain" id="PRO_1000011747" description="GTPase Der">
    <location>
        <begin position="1"/>
        <end position="436"/>
    </location>
</feature>
<feature type="domain" description="EngA-type G 1">
    <location>
        <begin position="4"/>
        <end position="167"/>
    </location>
</feature>
<feature type="domain" description="EngA-type G 2">
    <location>
        <begin position="176"/>
        <end position="351"/>
    </location>
</feature>
<feature type="domain" description="KH-like" evidence="1">
    <location>
        <begin position="352"/>
        <end position="436"/>
    </location>
</feature>
<feature type="binding site" evidence="1">
    <location>
        <begin position="10"/>
        <end position="17"/>
    </location>
    <ligand>
        <name>GTP</name>
        <dbReference type="ChEBI" id="CHEBI:37565"/>
        <label>1</label>
    </ligand>
</feature>
<feature type="binding site" evidence="1">
    <location>
        <begin position="57"/>
        <end position="61"/>
    </location>
    <ligand>
        <name>GTP</name>
        <dbReference type="ChEBI" id="CHEBI:37565"/>
        <label>1</label>
    </ligand>
</feature>
<feature type="binding site" evidence="1">
    <location>
        <begin position="119"/>
        <end position="122"/>
    </location>
    <ligand>
        <name>GTP</name>
        <dbReference type="ChEBI" id="CHEBI:37565"/>
        <label>1</label>
    </ligand>
</feature>
<feature type="binding site" evidence="1">
    <location>
        <begin position="182"/>
        <end position="189"/>
    </location>
    <ligand>
        <name>GTP</name>
        <dbReference type="ChEBI" id="CHEBI:37565"/>
        <label>2</label>
    </ligand>
</feature>
<feature type="binding site" evidence="1">
    <location>
        <begin position="229"/>
        <end position="233"/>
    </location>
    <ligand>
        <name>GTP</name>
        <dbReference type="ChEBI" id="CHEBI:37565"/>
        <label>2</label>
    </ligand>
</feature>
<feature type="binding site" evidence="1">
    <location>
        <begin position="294"/>
        <end position="297"/>
    </location>
    <ligand>
        <name>GTP</name>
        <dbReference type="ChEBI" id="CHEBI:37565"/>
        <label>2</label>
    </ligand>
</feature>
<keyword id="KW-0342">GTP-binding</keyword>
<keyword id="KW-0547">Nucleotide-binding</keyword>
<keyword id="KW-0677">Repeat</keyword>
<keyword id="KW-0690">Ribosome biogenesis</keyword>
<protein>
    <recommendedName>
        <fullName evidence="1">GTPase Der</fullName>
    </recommendedName>
    <alternativeName>
        <fullName evidence="1">GTP-binding protein EngA</fullName>
    </alternativeName>
</protein>
<comment type="function">
    <text evidence="1">GTPase that plays an essential role in the late steps of ribosome biogenesis.</text>
</comment>
<comment type="subunit">
    <text evidence="1">Associates with the 50S ribosomal subunit.</text>
</comment>
<comment type="similarity">
    <text evidence="1">Belongs to the TRAFAC class TrmE-Era-EngA-EngB-Septin-like GTPase superfamily. EngA (Der) GTPase family.</text>
</comment>
<proteinExistence type="inferred from homology"/>
<gene>
    <name evidence="1" type="primary">der</name>
    <name type="synonym">engA</name>
    <name type="ordered locus">SAUSA300_1364</name>
</gene>
<dbReference type="EMBL" id="CP000255">
    <property type="protein sequence ID" value="ABD22138.1"/>
    <property type="molecule type" value="Genomic_DNA"/>
</dbReference>
<dbReference type="RefSeq" id="WP_000165536.1">
    <property type="nucleotide sequence ID" value="NZ_CP027476.1"/>
</dbReference>
<dbReference type="SMR" id="Q2FGW7"/>
<dbReference type="KEGG" id="saa:SAUSA300_1364"/>
<dbReference type="HOGENOM" id="CLU_016077_6_2_9"/>
<dbReference type="OMA" id="CNLPQYV"/>
<dbReference type="Proteomes" id="UP000001939">
    <property type="component" value="Chromosome"/>
</dbReference>
<dbReference type="GO" id="GO:0005525">
    <property type="term" value="F:GTP binding"/>
    <property type="evidence" value="ECO:0007669"/>
    <property type="project" value="UniProtKB-UniRule"/>
</dbReference>
<dbReference type="GO" id="GO:0043022">
    <property type="term" value="F:ribosome binding"/>
    <property type="evidence" value="ECO:0007669"/>
    <property type="project" value="TreeGrafter"/>
</dbReference>
<dbReference type="GO" id="GO:0042254">
    <property type="term" value="P:ribosome biogenesis"/>
    <property type="evidence" value="ECO:0007669"/>
    <property type="project" value="UniProtKB-KW"/>
</dbReference>
<dbReference type="CDD" id="cd01894">
    <property type="entry name" value="EngA1"/>
    <property type="match status" value="1"/>
</dbReference>
<dbReference type="CDD" id="cd01895">
    <property type="entry name" value="EngA2"/>
    <property type="match status" value="1"/>
</dbReference>
<dbReference type="FunFam" id="3.30.300.20:FF:000004">
    <property type="entry name" value="GTPase Der"/>
    <property type="match status" value="1"/>
</dbReference>
<dbReference type="FunFam" id="3.40.50.300:FF:000040">
    <property type="entry name" value="GTPase Der"/>
    <property type="match status" value="1"/>
</dbReference>
<dbReference type="FunFam" id="3.40.50.300:FF:000057">
    <property type="entry name" value="GTPase Der"/>
    <property type="match status" value="1"/>
</dbReference>
<dbReference type="Gene3D" id="3.30.300.20">
    <property type="match status" value="1"/>
</dbReference>
<dbReference type="Gene3D" id="3.40.50.300">
    <property type="entry name" value="P-loop containing nucleotide triphosphate hydrolases"/>
    <property type="match status" value="2"/>
</dbReference>
<dbReference type="HAMAP" id="MF_00195">
    <property type="entry name" value="GTPase_Der"/>
    <property type="match status" value="1"/>
</dbReference>
<dbReference type="InterPro" id="IPR031166">
    <property type="entry name" value="G_ENGA"/>
</dbReference>
<dbReference type="InterPro" id="IPR006073">
    <property type="entry name" value="GTP-bd"/>
</dbReference>
<dbReference type="InterPro" id="IPR016484">
    <property type="entry name" value="GTPase_Der"/>
</dbReference>
<dbReference type="InterPro" id="IPR032859">
    <property type="entry name" value="KH_dom-like"/>
</dbReference>
<dbReference type="InterPro" id="IPR015946">
    <property type="entry name" value="KH_dom-like_a/b"/>
</dbReference>
<dbReference type="InterPro" id="IPR027417">
    <property type="entry name" value="P-loop_NTPase"/>
</dbReference>
<dbReference type="InterPro" id="IPR005225">
    <property type="entry name" value="Small_GTP-bd"/>
</dbReference>
<dbReference type="NCBIfam" id="TIGR03594">
    <property type="entry name" value="GTPase_EngA"/>
    <property type="match status" value="1"/>
</dbReference>
<dbReference type="NCBIfam" id="TIGR00231">
    <property type="entry name" value="small_GTP"/>
    <property type="match status" value="2"/>
</dbReference>
<dbReference type="PANTHER" id="PTHR43834">
    <property type="entry name" value="GTPASE DER"/>
    <property type="match status" value="1"/>
</dbReference>
<dbReference type="PANTHER" id="PTHR43834:SF6">
    <property type="entry name" value="GTPASE DER"/>
    <property type="match status" value="1"/>
</dbReference>
<dbReference type="Pfam" id="PF14714">
    <property type="entry name" value="KH_dom-like"/>
    <property type="match status" value="1"/>
</dbReference>
<dbReference type="Pfam" id="PF01926">
    <property type="entry name" value="MMR_HSR1"/>
    <property type="match status" value="2"/>
</dbReference>
<dbReference type="PIRSF" id="PIRSF006485">
    <property type="entry name" value="GTP-binding_EngA"/>
    <property type="match status" value="1"/>
</dbReference>
<dbReference type="PRINTS" id="PR00326">
    <property type="entry name" value="GTP1OBG"/>
</dbReference>
<dbReference type="SUPFAM" id="SSF52540">
    <property type="entry name" value="P-loop containing nucleoside triphosphate hydrolases"/>
    <property type="match status" value="2"/>
</dbReference>
<dbReference type="PROSITE" id="PS51712">
    <property type="entry name" value="G_ENGA"/>
    <property type="match status" value="2"/>
</dbReference>
<sequence>MTKPIVAIVGRPNVGKSTIFNRIVGERVSIVEDTPGVTRDRIYSSGEWLTHDFNIIDTGGIEIGDAPFQTQIRAQAEIAIDEAYVIIFMVNVREGLTQSDEMVAQILYKSKKPVVLAVNKVDNMEMRTDVYDFYSLGFGEPYPISGSHGLGLGDLLDAVVSHFGEEEEDPYDEDTIRLSIIGRPNVGKSSLVNAILGEDRVIVSNVAGTTRDAIDTEYSYDGQDYVLIDTAGMRKKGKVYESTEKYSVLRALKAIERSNVVLVVIDAEQGIIEQDKRVAGYAHEQGKAVVIVVNKWDTVEKDSKTMKKFEDEVRKEFQFLDYAQIAFVSAKERTRLRTLFPYINEASENHKKRVQSSTLNEVVTGAISMNPTPTDKGRRLNVFYATQVAIEPPTFVVFVNDVELMHFSYKRYLENQIRAAFGFEGTPIHIIARKRN</sequence>
<evidence type="ECO:0000255" key="1">
    <source>
        <dbReference type="HAMAP-Rule" id="MF_00195"/>
    </source>
</evidence>